<accession>Q8PJ31</accession>
<evidence type="ECO:0000255" key="1">
    <source>
        <dbReference type="HAMAP-Rule" id="MF_01554"/>
    </source>
</evidence>
<organism>
    <name type="scientific">Xanthomonas axonopodis pv. citri (strain 306)</name>
    <dbReference type="NCBI Taxonomy" id="190486"/>
    <lineage>
        <taxon>Bacteria</taxon>
        <taxon>Pseudomonadati</taxon>
        <taxon>Pseudomonadota</taxon>
        <taxon>Gammaproteobacteria</taxon>
        <taxon>Lysobacterales</taxon>
        <taxon>Lysobacteraceae</taxon>
        <taxon>Xanthomonas</taxon>
    </lineage>
</organism>
<dbReference type="EC" id="5.4.2.10" evidence="1"/>
<dbReference type="EMBL" id="AE008923">
    <property type="protein sequence ID" value="AAM37559.1"/>
    <property type="molecule type" value="Genomic_DNA"/>
</dbReference>
<dbReference type="RefSeq" id="WP_011051780.1">
    <property type="nucleotide sequence ID" value="NC_003919.1"/>
</dbReference>
<dbReference type="SMR" id="Q8PJ31"/>
<dbReference type="GeneID" id="66911803"/>
<dbReference type="KEGG" id="xac:XAC2714"/>
<dbReference type="eggNOG" id="COG1109">
    <property type="taxonomic scope" value="Bacteria"/>
</dbReference>
<dbReference type="HOGENOM" id="CLU_016950_7_0_6"/>
<dbReference type="Proteomes" id="UP000000576">
    <property type="component" value="Chromosome"/>
</dbReference>
<dbReference type="GO" id="GO:0005829">
    <property type="term" value="C:cytosol"/>
    <property type="evidence" value="ECO:0007669"/>
    <property type="project" value="TreeGrafter"/>
</dbReference>
<dbReference type="GO" id="GO:0000287">
    <property type="term" value="F:magnesium ion binding"/>
    <property type="evidence" value="ECO:0007669"/>
    <property type="project" value="UniProtKB-UniRule"/>
</dbReference>
<dbReference type="GO" id="GO:0008966">
    <property type="term" value="F:phosphoglucosamine mutase activity"/>
    <property type="evidence" value="ECO:0007669"/>
    <property type="project" value="UniProtKB-UniRule"/>
</dbReference>
<dbReference type="GO" id="GO:0004615">
    <property type="term" value="F:phosphomannomutase activity"/>
    <property type="evidence" value="ECO:0007669"/>
    <property type="project" value="TreeGrafter"/>
</dbReference>
<dbReference type="GO" id="GO:0005975">
    <property type="term" value="P:carbohydrate metabolic process"/>
    <property type="evidence" value="ECO:0007669"/>
    <property type="project" value="InterPro"/>
</dbReference>
<dbReference type="GO" id="GO:0009252">
    <property type="term" value="P:peptidoglycan biosynthetic process"/>
    <property type="evidence" value="ECO:0007669"/>
    <property type="project" value="TreeGrafter"/>
</dbReference>
<dbReference type="GO" id="GO:0006048">
    <property type="term" value="P:UDP-N-acetylglucosamine biosynthetic process"/>
    <property type="evidence" value="ECO:0007669"/>
    <property type="project" value="TreeGrafter"/>
</dbReference>
<dbReference type="CDD" id="cd05802">
    <property type="entry name" value="GlmM"/>
    <property type="match status" value="1"/>
</dbReference>
<dbReference type="FunFam" id="3.30.310.50:FF:000001">
    <property type="entry name" value="Phosphoglucosamine mutase"/>
    <property type="match status" value="1"/>
</dbReference>
<dbReference type="FunFam" id="3.40.120.10:FF:000001">
    <property type="entry name" value="Phosphoglucosamine mutase"/>
    <property type="match status" value="1"/>
</dbReference>
<dbReference type="FunFam" id="3.40.120.10:FF:000003">
    <property type="entry name" value="Phosphoglucosamine mutase"/>
    <property type="match status" value="1"/>
</dbReference>
<dbReference type="Gene3D" id="3.40.120.10">
    <property type="entry name" value="Alpha-D-Glucose-1,6-Bisphosphate, subunit A, domain 3"/>
    <property type="match status" value="3"/>
</dbReference>
<dbReference type="Gene3D" id="3.30.310.50">
    <property type="entry name" value="Alpha-D-phosphohexomutase, C-terminal domain"/>
    <property type="match status" value="1"/>
</dbReference>
<dbReference type="HAMAP" id="MF_01554_B">
    <property type="entry name" value="GlmM_B"/>
    <property type="match status" value="1"/>
</dbReference>
<dbReference type="InterPro" id="IPR005844">
    <property type="entry name" value="A-D-PHexomutase_a/b/a-I"/>
</dbReference>
<dbReference type="InterPro" id="IPR016055">
    <property type="entry name" value="A-D-PHexomutase_a/b/a-I/II/III"/>
</dbReference>
<dbReference type="InterPro" id="IPR005845">
    <property type="entry name" value="A-D-PHexomutase_a/b/a-II"/>
</dbReference>
<dbReference type="InterPro" id="IPR005846">
    <property type="entry name" value="A-D-PHexomutase_a/b/a-III"/>
</dbReference>
<dbReference type="InterPro" id="IPR005843">
    <property type="entry name" value="A-D-PHexomutase_C"/>
</dbReference>
<dbReference type="InterPro" id="IPR036900">
    <property type="entry name" value="A-D-PHexomutase_C_sf"/>
</dbReference>
<dbReference type="InterPro" id="IPR016066">
    <property type="entry name" value="A-D-PHexomutase_CS"/>
</dbReference>
<dbReference type="InterPro" id="IPR005841">
    <property type="entry name" value="Alpha-D-phosphohexomutase_SF"/>
</dbReference>
<dbReference type="InterPro" id="IPR006352">
    <property type="entry name" value="GlmM_bact"/>
</dbReference>
<dbReference type="InterPro" id="IPR050060">
    <property type="entry name" value="Phosphoglucosamine_mutase"/>
</dbReference>
<dbReference type="NCBIfam" id="TIGR01455">
    <property type="entry name" value="glmM"/>
    <property type="match status" value="1"/>
</dbReference>
<dbReference type="NCBIfam" id="NF008139">
    <property type="entry name" value="PRK10887.1"/>
    <property type="match status" value="1"/>
</dbReference>
<dbReference type="PANTHER" id="PTHR42946:SF1">
    <property type="entry name" value="PHOSPHOGLUCOMUTASE (ALPHA-D-GLUCOSE-1,6-BISPHOSPHATE-DEPENDENT)"/>
    <property type="match status" value="1"/>
</dbReference>
<dbReference type="PANTHER" id="PTHR42946">
    <property type="entry name" value="PHOSPHOHEXOSE MUTASE"/>
    <property type="match status" value="1"/>
</dbReference>
<dbReference type="Pfam" id="PF02878">
    <property type="entry name" value="PGM_PMM_I"/>
    <property type="match status" value="1"/>
</dbReference>
<dbReference type="Pfam" id="PF02879">
    <property type="entry name" value="PGM_PMM_II"/>
    <property type="match status" value="1"/>
</dbReference>
<dbReference type="Pfam" id="PF02880">
    <property type="entry name" value="PGM_PMM_III"/>
    <property type="match status" value="1"/>
</dbReference>
<dbReference type="Pfam" id="PF00408">
    <property type="entry name" value="PGM_PMM_IV"/>
    <property type="match status" value="1"/>
</dbReference>
<dbReference type="PRINTS" id="PR00509">
    <property type="entry name" value="PGMPMM"/>
</dbReference>
<dbReference type="SUPFAM" id="SSF55957">
    <property type="entry name" value="Phosphoglucomutase, C-terminal domain"/>
    <property type="match status" value="1"/>
</dbReference>
<dbReference type="SUPFAM" id="SSF53738">
    <property type="entry name" value="Phosphoglucomutase, first 3 domains"/>
    <property type="match status" value="3"/>
</dbReference>
<dbReference type="PROSITE" id="PS00710">
    <property type="entry name" value="PGM_PMM"/>
    <property type="match status" value="1"/>
</dbReference>
<proteinExistence type="inferred from homology"/>
<protein>
    <recommendedName>
        <fullName evidence="1">Phosphoglucosamine mutase</fullName>
        <ecNumber evidence="1">5.4.2.10</ecNumber>
    </recommendedName>
</protein>
<reference key="1">
    <citation type="journal article" date="2002" name="Nature">
        <title>Comparison of the genomes of two Xanthomonas pathogens with differing host specificities.</title>
        <authorList>
            <person name="da Silva A.C.R."/>
            <person name="Ferro J.A."/>
            <person name="Reinach F.C."/>
            <person name="Farah C.S."/>
            <person name="Furlan L.R."/>
            <person name="Quaggio R.B."/>
            <person name="Monteiro-Vitorello C.B."/>
            <person name="Van Sluys M.A."/>
            <person name="Almeida N.F. Jr."/>
            <person name="Alves L.M.C."/>
            <person name="do Amaral A.M."/>
            <person name="Bertolini M.C."/>
            <person name="Camargo L.E.A."/>
            <person name="Camarotte G."/>
            <person name="Cannavan F."/>
            <person name="Cardozo J."/>
            <person name="Chambergo F."/>
            <person name="Ciapina L.P."/>
            <person name="Cicarelli R.M.B."/>
            <person name="Coutinho L.L."/>
            <person name="Cursino-Santos J.R."/>
            <person name="El-Dorry H."/>
            <person name="Faria J.B."/>
            <person name="Ferreira A.J.S."/>
            <person name="Ferreira R.C.C."/>
            <person name="Ferro M.I.T."/>
            <person name="Formighieri E.F."/>
            <person name="Franco M.C."/>
            <person name="Greggio C.C."/>
            <person name="Gruber A."/>
            <person name="Katsuyama A.M."/>
            <person name="Kishi L.T."/>
            <person name="Leite R.P."/>
            <person name="Lemos E.G.M."/>
            <person name="Lemos M.V.F."/>
            <person name="Locali E.C."/>
            <person name="Machado M.A."/>
            <person name="Madeira A.M.B.N."/>
            <person name="Martinez-Rossi N.M."/>
            <person name="Martins E.C."/>
            <person name="Meidanis J."/>
            <person name="Menck C.F.M."/>
            <person name="Miyaki C.Y."/>
            <person name="Moon D.H."/>
            <person name="Moreira L.M."/>
            <person name="Novo M.T.M."/>
            <person name="Okura V.K."/>
            <person name="Oliveira M.C."/>
            <person name="Oliveira V.R."/>
            <person name="Pereira H.A."/>
            <person name="Rossi A."/>
            <person name="Sena J.A.D."/>
            <person name="Silva C."/>
            <person name="de Souza R.F."/>
            <person name="Spinola L.A.F."/>
            <person name="Takita M.A."/>
            <person name="Tamura R.E."/>
            <person name="Teixeira E.C."/>
            <person name="Tezza R.I.D."/>
            <person name="Trindade dos Santos M."/>
            <person name="Truffi D."/>
            <person name="Tsai S.M."/>
            <person name="White F.F."/>
            <person name="Setubal J.C."/>
            <person name="Kitajima J.P."/>
        </authorList>
    </citation>
    <scope>NUCLEOTIDE SEQUENCE [LARGE SCALE GENOMIC DNA]</scope>
    <source>
        <strain>306</strain>
    </source>
</reference>
<comment type="function">
    <text evidence="1">Catalyzes the conversion of glucosamine-6-phosphate to glucosamine-1-phosphate.</text>
</comment>
<comment type="catalytic activity">
    <reaction evidence="1">
        <text>alpha-D-glucosamine 1-phosphate = D-glucosamine 6-phosphate</text>
        <dbReference type="Rhea" id="RHEA:23424"/>
        <dbReference type="ChEBI" id="CHEBI:58516"/>
        <dbReference type="ChEBI" id="CHEBI:58725"/>
        <dbReference type="EC" id="5.4.2.10"/>
    </reaction>
</comment>
<comment type="cofactor">
    <cofactor evidence="1">
        <name>Mg(2+)</name>
        <dbReference type="ChEBI" id="CHEBI:18420"/>
    </cofactor>
    <text evidence="1">Binds 1 Mg(2+) ion per subunit.</text>
</comment>
<comment type="PTM">
    <text evidence="1">Activated by phosphorylation.</text>
</comment>
<comment type="similarity">
    <text evidence="1">Belongs to the phosphohexose mutase family.</text>
</comment>
<gene>
    <name evidence="1" type="primary">glmM</name>
    <name type="ordered locus">XAC2714</name>
</gene>
<sequence length="449" mass="47209">MSARKYFGTDGIRGRVGQGVISADFVLRLGNALGRVLTQGRSKRPLVLIGKDTRISGYMFEAALEAGLVAAGADVQLIGPMPTPAIAFLTSTLRADAGVVISASHNPHYDNGIKFFSAEGEKLDDATEAAIEAALDEPFHTVESERLGKAIRTRDAIGRYIEFCKASVARGFTLHGLKMVLDCAHGATYHIAPMLFRELGAEVVVIGAAPDGLNINAGVGSTHIDNLAAKVRECGAHLGIAFDGDGDRVLMADDQGNPVDGDDLLYVLARSWQASGRLTGTVVGTLMTNYGLEQALAALHIPFQRAKVGDRYVHQALVEGGGTLGGETSGHLLCLDRASTGDGIVSALQVLEALGRDRQSLRDALTSLSKVPQKTVNVRLDGGAAKAIVEAANVQQALQQAQAAVRGRGRAFLRPSGTEPVVRVTVEADDAGLMQDTLDRLSGAVRDAA</sequence>
<keyword id="KW-0413">Isomerase</keyword>
<keyword id="KW-0460">Magnesium</keyword>
<keyword id="KW-0479">Metal-binding</keyword>
<keyword id="KW-0597">Phosphoprotein</keyword>
<name>GLMM_XANAC</name>
<feature type="chain" id="PRO_0000148003" description="Phosphoglucosamine mutase">
    <location>
        <begin position="1"/>
        <end position="449"/>
    </location>
</feature>
<feature type="active site" description="Phosphoserine intermediate" evidence="1">
    <location>
        <position position="104"/>
    </location>
</feature>
<feature type="binding site" description="via phosphate group" evidence="1">
    <location>
        <position position="104"/>
    </location>
    <ligand>
        <name>Mg(2+)</name>
        <dbReference type="ChEBI" id="CHEBI:18420"/>
    </ligand>
</feature>
<feature type="binding site" evidence="1">
    <location>
        <position position="243"/>
    </location>
    <ligand>
        <name>Mg(2+)</name>
        <dbReference type="ChEBI" id="CHEBI:18420"/>
    </ligand>
</feature>
<feature type="binding site" evidence="1">
    <location>
        <position position="245"/>
    </location>
    <ligand>
        <name>Mg(2+)</name>
        <dbReference type="ChEBI" id="CHEBI:18420"/>
    </ligand>
</feature>
<feature type="binding site" evidence="1">
    <location>
        <position position="247"/>
    </location>
    <ligand>
        <name>Mg(2+)</name>
        <dbReference type="ChEBI" id="CHEBI:18420"/>
    </ligand>
</feature>
<feature type="modified residue" description="Phosphoserine" evidence="1">
    <location>
        <position position="104"/>
    </location>
</feature>